<keyword id="KW-0067">ATP-binding</keyword>
<keyword id="KW-0119">Carbohydrate metabolism</keyword>
<keyword id="KW-0418">Kinase</keyword>
<keyword id="KW-0547">Nucleotide-binding</keyword>
<keyword id="KW-0808">Transferase</keyword>
<protein>
    <recommendedName>
        <fullName evidence="1">Anhydro-N-acetylmuramic acid kinase</fullName>
        <ecNumber evidence="1">2.7.1.170</ecNumber>
    </recommendedName>
    <alternativeName>
        <fullName evidence="1">AnhMurNAc kinase</fullName>
    </alternativeName>
</protein>
<name>ANMK_RHIR8</name>
<dbReference type="EC" id="2.7.1.170" evidence="1"/>
<dbReference type="EMBL" id="CP000629">
    <property type="protein sequence ID" value="ACM30097.1"/>
    <property type="molecule type" value="Genomic_DNA"/>
</dbReference>
<dbReference type="RefSeq" id="WP_012650318.1">
    <property type="nucleotide sequence ID" value="NC_011983.1"/>
</dbReference>
<dbReference type="SMR" id="B9JJK5"/>
<dbReference type="STRING" id="311403.Arad_8943"/>
<dbReference type="KEGG" id="ara:Arad_8943"/>
<dbReference type="eggNOG" id="COG2377">
    <property type="taxonomic scope" value="Bacteria"/>
</dbReference>
<dbReference type="HOGENOM" id="CLU_038782_3_0_5"/>
<dbReference type="UniPathway" id="UPA00343"/>
<dbReference type="UniPathway" id="UPA00544"/>
<dbReference type="Proteomes" id="UP000001600">
    <property type="component" value="Chromosome 2"/>
</dbReference>
<dbReference type="GO" id="GO:0005524">
    <property type="term" value="F:ATP binding"/>
    <property type="evidence" value="ECO:0007669"/>
    <property type="project" value="UniProtKB-UniRule"/>
</dbReference>
<dbReference type="GO" id="GO:0016301">
    <property type="term" value="F:kinase activity"/>
    <property type="evidence" value="ECO:0007669"/>
    <property type="project" value="UniProtKB-KW"/>
</dbReference>
<dbReference type="GO" id="GO:0016773">
    <property type="term" value="F:phosphotransferase activity, alcohol group as acceptor"/>
    <property type="evidence" value="ECO:0007669"/>
    <property type="project" value="UniProtKB-UniRule"/>
</dbReference>
<dbReference type="GO" id="GO:0097175">
    <property type="term" value="P:1,6-anhydro-N-acetyl-beta-muramic acid catabolic process"/>
    <property type="evidence" value="ECO:0007669"/>
    <property type="project" value="UniProtKB-UniRule"/>
</dbReference>
<dbReference type="GO" id="GO:0006040">
    <property type="term" value="P:amino sugar metabolic process"/>
    <property type="evidence" value="ECO:0007669"/>
    <property type="project" value="InterPro"/>
</dbReference>
<dbReference type="GO" id="GO:0009254">
    <property type="term" value="P:peptidoglycan turnover"/>
    <property type="evidence" value="ECO:0007669"/>
    <property type="project" value="UniProtKB-UniRule"/>
</dbReference>
<dbReference type="Gene3D" id="3.30.420.40">
    <property type="match status" value="2"/>
</dbReference>
<dbReference type="HAMAP" id="MF_01270">
    <property type="entry name" value="AnhMurNAc_kinase"/>
    <property type="match status" value="1"/>
</dbReference>
<dbReference type="InterPro" id="IPR005338">
    <property type="entry name" value="Anhydro_N_Ac-Mur_kinase"/>
</dbReference>
<dbReference type="InterPro" id="IPR043129">
    <property type="entry name" value="ATPase_NBD"/>
</dbReference>
<dbReference type="NCBIfam" id="NF007141">
    <property type="entry name" value="PRK09585.1-5"/>
    <property type="match status" value="1"/>
</dbReference>
<dbReference type="PANTHER" id="PTHR30605">
    <property type="entry name" value="ANHYDRO-N-ACETYLMURAMIC ACID KINASE"/>
    <property type="match status" value="1"/>
</dbReference>
<dbReference type="PANTHER" id="PTHR30605:SF0">
    <property type="entry name" value="ANHYDRO-N-ACETYLMURAMIC ACID KINASE"/>
    <property type="match status" value="1"/>
</dbReference>
<dbReference type="Pfam" id="PF03702">
    <property type="entry name" value="AnmK"/>
    <property type="match status" value="1"/>
</dbReference>
<dbReference type="SUPFAM" id="SSF53067">
    <property type="entry name" value="Actin-like ATPase domain"/>
    <property type="match status" value="1"/>
</dbReference>
<proteinExistence type="inferred from homology"/>
<accession>B9JJK5</accession>
<feature type="chain" id="PRO_1000165150" description="Anhydro-N-acetylmuramic acid kinase">
    <location>
        <begin position="1"/>
        <end position="371"/>
    </location>
</feature>
<feature type="binding site" evidence="1">
    <location>
        <begin position="12"/>
        <end position="20"/>
    </location>
    <ligand>
        <name>ATP</name>
        <dbReference type="ChEBI" id="CHEBI:30616"/>
    </ligand>
</feature>
<reference key="1">
    <citation type="journal article" date="2009" name="J. Bacteriol.">
        <title>Genome sequences of three Agrobacterium biovars help elucidate the evolution of multichromosome genomes in bacteria.</title>
        <authorList>
            <person name="Slater S.C."/>
            <person name="Goldman B.S."/>
            <person name="Goodner B."/>
            <person name="Setubal J.C."/>
            <person name="Farrand S.K."/>
            <person name="Nester E.W."/>
            <person name="Burr T.J."/>
            <person name="Banta L."/>
            <person name="Dickerman A.W."/>
            <person name="Paulsen I."/>
            <person name="Otten L."/>
            <person name="Suen G."/>
            <person name="Welch R."/>
            <person name="Almeida N.F."/>
            <person name="Arnold F."/>
            <person name="Burton O.T."/>
            <person name="Du Z."/>
            <person name="Ewing A."/>
            <person name="Godsy E."/>
            <person name="Heisel S."/>
            <person name="Houmiel K.L."/>
            <person name="Jhaveri J."/>
            <person name="Lu J."/>
            <person name="Miller N.M."/>
            <person name="Norton S."/>
            <person name="Chen Q."/>
            <person name="Phoolcharoen W."/>
            <person name="Ohlin V."/>
            <person name="Ondrusek D."/>
            <person name="Pride N."/>
            <person name="Stricklin S.L."/>
            <person name="Sun J."/>
            <person name="Wheeler C."/>
            <person name="Wilson L."/>
            <person name="Zhu H."/>
            <person name="Wood D.W."/>
        </authorList>
    </citation>
    <scope>NUCLEOTIDE SEQUENCE [LARGE SCALE GENOMIC DNA]</scope>
    <source>
        <strain>K84 / ATCC BAA-868</strain>
    </source>
</reference>
<sequence length="371" mass="39195">MEPIWAVGLMTGTVLDGNIDVALIKTDGERIAEFGPYALAPYPDWIRRLLEETLAQARVWNFNGPEPAIFKEAEEALTRAQSAAVKELVEGFGLTMADIGVVGFHGQTVLHRAPQKGRLGDTRQLGDGELMHSILGTKVAYDFRSADVRAGGQGAPLAAAYHTALLRSAGTGDDTAILNLGGVANITWSDGEGNFVAFDTGPANAPLNDFIKSHGLGEMDRDGALGRAGKVDETRLAKLLEHPYLSAAYPKSLDRFDFGASMADGLSVEDGAATLSAFTASAVGKALDLLPRRPKKLVVSGGGRHNPTIMSMLETHAGVTPIGAEMFGWRGDAVEAECFAFLAVRVLRGLPISFPGTTGVPAPMRGGRLAE</sequence>
<evidence type="ECO:0000255" key="1">
    <source>
        <dbReference type="HAMAP-Rule" id="MF_01270"/>
    </source>
</evidence>
<comment type="function">
    <text evidence="1">Catalyzes the specific phosphorylation of 1,6-anhydro-N-acetylmuramic acid (anhMurNAc) with the simultaneous cleavage of the 1,6-anhydro ring, generating MurNAc-6-P. Is required for the utilization of anhMurNAc either imported from the medium or derived from its own cell wall murein, and thus plays a role in cell wall recycling.</text>
</comment>
<comment type="catalytic activity">
    <reaction evidence="1">
        <text>1,6-anhydro-N-acetyl-beta-muramate + ATP + H2O = N-acetyl-D-muramate 6-phosphate + ADP + H(+)</text>
        <dbReference type="Rhea" id="RHEA:24952"/>
        <dbReference type="ChEBI" id="CHEBI:15377"/>
        <dbReference type="ChEBI" id="CHEBI:15378"/>
        <dbReference type="ChEBI" id="CHEBI:30616"/>
        <dbReference type="ChEBI" id="CHEBI:58690"/>
        <dbReference type="ChEBI" id="CHEBI:58722"/>
        <dbReference type="ChEBI" id="CHEBI:456216"/>
        <dbReference type="EC" id="2.7.1.170"/>
    </reaction>
</comment>
<comment type="pathway">
    <text evidence="1">Amino-sugar metabolism; 1,6-anhydro-N-acetylmuramate degradation.</text>
</comment>
<comment type="pathway">
    <text evidence="1">Cell wall biogenesis; peptidoglycan recycling.</text>
</comment>
<comment type="similarity">
    <text evidence="1">Belongs to the anhydro-N-acetylmuramic acid kinase family.</text>
</comment>
<gene>
    <name evidence="1" type="primary">anmK</name>
    <name type="ordered locus">Arad_8943</name>
</gene>
<organism>
    <name type="scientific">Rhizobium rhizogenes (strain K84 / ATCC BAA-868)</name>
    <name type="common">Agrobacterium radiobacter</name>
    <dbReference type="NCBI Taxonomy" id="311403"/>
    <lineage>
        <taxon>Bacteria</taxon>
        <taxon>Pseudomonadati</taxon>
        <taxon>Pseudomonadota</taxon>
        <taxon>Alphaproteobacteria</taxon>
        <taxon>Hyphomicrobiales</taxon>
        <taxon>Rhizobiaceae</taxon>
        <taxon>Rhizobium/Agrobacterium group</taxon>
        <taxon>Rhizobium</taxon>
    </lineage>
</organism>